<sequence>MIIGIGNDIIEIERIEKAISKEGFKNKIYTQKELENIQKRGNRTETYAGIFSAKEAISKAIGTGVREFSLTDLEILNDDLGKPYVVVSEKLDKILRNKKENYQIEISISHSRKYATAMAIIL</sequence>
<protein>
    <recommendedName>
        <fullName evidence="1">Holo-[acyl-carrier-protein] synthase</fullName>
        <shortName evidence="1">Holo-ACP synthase</shortName>
        <ecNumber evidence="1">2.7.8.7</ecNumber>
    </recommendedName>
    <alternativeName>
        <fullName evidence="1">4'-phosphopantetheinyl transferase AcpS</fullName>
    </alternativeName>
</protein>
<accession>Q8RDZ7</accession>
<name>ACPS_FUSNN</name>
<feature type="chain" id="PRO_0000175649" description="Holo-[acyl-carrier-protein] synthase">
    <location>
        <begin position="1"/>
        <end position="122"/>
    </location>
</feature>
<feature type="binding site" evidence="1">
    <location>
        <position position="8"/>
    </location>
    <ligand>
        <name>Mg(2+)</name>
        <dbReference type="ChEBI" id="CHEBI:18420"/>
    </ligand>
</feature>
<feature type="binding site" evidence="1">
    <location>
        <position position="55"/>
    </location>
    <ligand>
        <name>Mg(2+)</name>
        <dbReference type="ChEBI" id="CHEBI:18420"/>
    </ligand>
</feature>
<evidence type="ECO:0000255" key="1">
    <source>
        <dbReference type="HAMAP-Rule" id="MF_00101"/>
    </source>
</evidence>
<dbReference type="EC" id="2.7.8.7" evidence="1"/>
<dbReference type="EMBL" id="AE009951">
    <property type="protein sequence ID" value="AAL95538.1"/>
    <property type="molecule type" value="Genomic_DNA"/>
</dbReference>
<dbReference type="RefSeq" id="NP_604239.1">
    <property type="nucleotide sequence ID" value="NC_003454.1"/>
</dbReference>
<dbReference type="RefSeq" id="WP_011017085.1">
    <property type="nucleotide sequence ID" value="NZ_OZ209243.1"/>
</dbReference>
<dbReference type="SMR" id="Q8RDZ7"/>
<dbReference type="FunCoup" id="Q8RDZ7">
    <property type="interactions" value="88"/>
</dbReference>
<dbReference type="STRING" id="190304.FN1342"/>
<dbReference type="PaxDb" id="190304-FN1342"/>
<dbReference type="EnsemblBacteria" id="AAL95538">
    <property type="protein sequence ID" value="AAL95538"/>
    <property type="gene ID" value="FN1342"/>
</dbReference>
<dbReference type="GeneID" id="79784316"/>
<dbReference type="KEGG" id="fnu:FN1342"/>
<dbReference type="PATRIC" id="fig|190304.8.peg.1905"/>
<dbReference type="eggNOG" id="COG0736">
    <property type="taxonomic scope" value="Bacteria"/>
</dbReference>
<dbReference type="HOGENOM" id="CLU_089696_0_2_0"/>
<dbReference type="InParanoid" id="Q8RDZ7"/>
<dbReference type="BioCyc" id="FNUC190304:G1FZS-1916-MONOMER"/>
<dbReference type="Proteomes" id="UP000002521">
    <property type="component" value="Chromosome"/>
</dbReference>
<dbReference type="GO" id="GO:0005737">
    <property type="term" value="C:cytoplasm"/>
    <property type="evidence" value="ECO:0007669"/>
    <property type="project" value="UniProtKB-SubCell"/>
</dbReference>
<dbReference type="GO" id="GO:0008897">
    <property type="term" value="F:holo-[acyl-carrier-protein] synthase activity"/>
    <property type="evidence" value="ECO:0007669"/>
    <property type="project" value="UniProtKB-UniRule"/>
</dbReference>
<dbReference type="GO" id="GO:0000287">
    <property type="term" value="F:magnesium ion binding"/>
    <property type="evidence" value="ECO:0007669"/>
    <property type="project" value="UniProtKB-UniRule"/>
</dbReference>
<dbReference type="GO" id="GO:0006633">
    <property type="term" value="P:fatty acid biosynthetic process"/>
    <property type="evidence" value="ECO:0007669"/>
    <property type="project" value="UniProtKB-UniRule"/>
</dbReference>
<dbReference type="Gene3D" id="3.90.470.20">
    <property type="entry name" value="4'-phosphopantetheinyl transferase domain"/>
    <property type="match status" value="1"/>
</dbReference>
<dbReference type="HAMAP" id="MF_00101">
    <property type="entry name" value="AcpS"/>
    <property type="match status" value="1"/>
</dbReference>
<dbReference type="InterPro" id="IPR008278">
    <property type="entry name" value="4-PPantetheinyl_Trfase_dom"/>
</dbReference>
<dbReference type="InterPro" id="IPR037143">
    <property type="entry name" value="4-PPantetheinyl_Trfase_dom_sf"/>
</dbReference>
<dbReference type="InterPro" id="IPR002582">
    <property type="entry name" value="ACPS"/>
</dbReference>
<dbReference type="InterPro" id="IPR004568">
    <property type="entry name" value="Ppantetheine-prot_Trfase_dom"/>
</dbReference>
<dbReference type="NCBIfam" id="TIGR00516">
    <property type="entry name" value="acpS"/>
    <property type="match status" value="1"/>
</dbReference>
<dbReference type="NCBIfam" id="TIGR00556">
    <property type="entry name" value="pantethn_trn"/>
    <property type="match status" value="1"/>
</dbReference>
<dbReference type="Pfam" id="PF01648">
    <property type="entry name" value="ACPS"/>
    <property type="match status" value="1"/>
</dbReference>
<dbReference type="SUPFAM" id="SSF56214">
    <property type="entry name" value="4'-phosphopantetheinyl transferase"/>
    <property type="match status" value="1"/>
</dbReference>
<organism>
    <name type="scientific">Fusobacterium nucleatum subsp. nucleatum (strain ATCC 25586 / DSM 15643 / BCRC 10681 / CIP 101130 / JCM 8532 / KCTC 2640 / LMG 13131 / VPI 4355)</name>
    <dbReference type="NCBI Taxonomy" id="190304"/>
    <lineage>
        <taxon>Bacteria</taxon>
        <taxon>Fusobacteriati</taxon>
        <taxon>Fusobacteriota</taxon>
        <taxon>Fusobacteriia</taxon>
        <taxon>Fusobacteriales</taxon>
        <taxon>Fusobacteriaceae</taxon>
        <taxon>Fusobacterium</taxon>
    </lineage>
</organism>
<reference key="1">
    <citation type="journal article" date="2002" name="J. Bacteriol.">
        <title>Genome sequence and analysis of the oral bacterium Fusobacterium nucleatum strain ATCC 25586.</title>
        <authorList>
            <person name="Kapatral V."/>
            <person name="Anderson I."/>
            <person name="Ivanova N."/>
            <person name="Reznik G."/>
            <person name="Los T."/>
            <person name="Lykidis A."/>
            <person name="Bhattacharyya A."/>
            <person name="Bartman A."/>
            <person name="Gardner W."/>
            <person name="Grechkin G."/>
            <person name="Zhu L."/>
            <person name="Vasieva O."/>
            <person name="Chu L."/>
            <person name="Kogan Y."/>
            <person name="Chaga O."/>
            <person name="Goltsman E."/>
            <person name="Bernal A."/>
            <person name="Larsen N."/>
            <person name="D'Souza M."/>
            <person name="Walunas T."/>
            <person name="Pusch G."/>
            <person name="Haselkorn R."/>
            <person name="Fonstein M."/>
            <person name="Kyrpides N.C."/>
            <person name="Overbeek R."/>
        </authorList>
    </citation>
    <scope>NUCLEOTIDE SEQUENCE [LARGE SCALE GENOMIC DNA]</scope>
    <source>
        <strain>ATCC 25586 / DSM 15643 / BCRC 10681 / CIP 101130 / JCM 8532 / KCTC 2640 / LMG 13131 / VPI 4355</strain>
    </source>
</reference>
<keyword id="KW-0963">Cytoplasm</keyword>
<keyword id="KW-0275">Fatty acid biosynthesis</keyword>
<keyword id="KW-0276">Fatty acid metabolism</keyword>
<keyword id="KW-0444">Lipid biosynthesis</keyword>
<keyword id="KW-0443">Lipid metabolism</keyword>
<keyword id="KW-0460">Magnesium</keyword>
<keyword id="KW-0479">Metal-binding</keyword>
<keyword id="KW-1185">Reference proteome</keyword>
<keyword id="KW-0808">Transferase</keyword>
<proteinExistence type="inferred from homology"/>
<comment type="function">
    <text evidence="1">Transfers the 4'-phosphopantetheine moiety from coenzyme A to a Ser of acyl-carrier-protein.</text>
</comment>
<comment type="catalytic activity">
    <reaction evidence="1">
        <text>apo-[ACP] + CoA = holo-[ACP] + adenosine 3',5'-bisphosphate + H(+)</text>
        <dbReference type="Rhea" id="RHEA:12068"/>
        <dbReference type="Rhea" id="RHEA-COMP:9685"/>
        <dbReference type="Rhea" id="RHEA-COMP:9690"/>
        <dbReference type="ChEBI" id="CHEBI:15378"/>
        <dbReference type="ChEBI" id="CHEBI:29999"/>
        <dbReference type="ChEBI" id="CHEBI:57287"/>
        <dbReference type="ChEBI" id="CHEBI:58343"/>
        <dbReference type="ChEBI" id="CHEBI:64479"/>
        <dbReference type="EC" id="2.7.8.7"/>
    </reaction>
</comment>
<comment type="cofactor">
    <cofactor evidence="1">
        <name>Mg(2+)</name>
        <dbReference type="ChEBI" id="CHEBI:18420"/>
    </cofactor>
</comment>
<comment type="subcellular location">
    <subcellularLocation>
        <location evidence="1">Cytoplasm</location>
    </subcellularLocation>
</comment>
<comment type="similarity">
    <text evidence="1">Belongs to the P-Pant transferase superfamily. AcpS family.</text>
</comment>
<gene>
    <name evidence="1" type="primary">acpS</name>
    <name type="ordered locus">FN1342</name>
</gene>